<name>AOC3_RAT</name>
<proteinExistence type="evidence at protein level"/>
<comment type="function">
    <text evidence="2 4">Catalyzes the oxidative deamination of primary amines to the corresponding aldehydes with the concomitant production of hydrogen peroxide and ammonia. Has a preference for the primary monoamines methylamine and benzylamine (PubMed:15744061). Could also act on 2-phenylethylamine but much less efficiently. At endothelial cells surface can also function as a cell adhesion protein that participates in lymphocyte extravasation and recirculation by mediating the binding of lymphocytes to peripheral lymph node vascular endothelial cells in an L-selectin-independent fashion (By similarity).</text>
</comment>
<comment type="catalytic activity">
    <reaction evidence="2">
        <text>methylamine + O2 + H2O = formaldehyde + H2O2 + NH4(+)</text>
        <dbReference type="Rhea" id="RHEA:59420"/>
        <dbReference type="ChEBI" id="CHEBI:15377"/>
        <dbReference type="ChEBI" id="CHEBI:15379"/>
        <dbReference type="ChEBI" id="CHEBI:16240"/>
        <dbReference type="ChEBI" id="CHEBI:16842"/>
        <dbReference type="ChEBI" id="CHEBI:28938"/>
        <dbReference type="ChEBI" id="CHEBI:59338"/>
    </reaction>
    <physiologicalReaction direction="left-to-right" evidence="2">
        <dbReference type="Rhea" id="RHEA:59421"/>
    </physiologicalReaction>
</comment>
<comment type="catalytic activity">
    <reaction evidence="4">
        <text>benzylamine + O2 + H2O = benzaldehyde + H2O2 + NH4(+)</text>
        <dbReference type="Rhea" id="RHEA:59424"/>
        <dbReference type="ChEBI" id="CHEBI:15377"/>
        <dbReference type="ChEBI" id="CHEBI:15379"/>
        <dbReference type="ChEBI" id="CHEBI:16240"/>
        <dbReference type="ChEBI" id="CHEBI:17169"/>
        <dbReference type="ChEBI" id="CHEBI:28938"/>
        <dbReference type="ChEBI" id="CHEBI:225238"/>
    </reaction>
    <physiologicalReaction direction="left-to-right" evidence="2">
        <dbReference type="Rhea" id="RHEA:59425"/>
    </physiologicalReaction>
</comment>
<comment type="catalytic activity">
    <reaction evidence="2">
        <text>2-phenylethylamine + O2 + H2O = 2-phenylacetaldehyde + H2O2 + NH4(+)</text>
        <dbReference type="Rhea" id="RHEA:25265"/>
        <dbReference type="ChEBI" id="CHEBI:15377"/>
        <dbReference type="ChEBI" id="CHEBI:15379"/>
        <dbReference type="ChEBI" id="CHEBI:16240"/>
        <dbReference type="ChEBI" id="CHEBI:16424"/>
        <dbReference type="ChEBI" id="CHEBI:28938"/>
        <dbReference type="ChEBI" id="CHEBI:225237"/>
        <dbReference type="EC" id="1.4.3.21"/>
    </reaction>
    <physiologicalReaction direction="left-to-right" evidence="2">
        <dbReference type="Rhea" id="RHEA:25266"/>
    </physiologicalReaction>
</comment>
<comment type="cofactor">
    <cofactor evidence="2">
        <name>Cu(2+)</name>
        <dbReference type="ChEBI" id="CHEBI:29036"/>
    </cofactor>
    <text evidence="2">Binds 1 copper ion per subunit.</text>
</comment>
<comment type="cofactor">
    <cofactor evidence="2">
        <name>Ca(2+)</name>
        <dbReference type="ChEBI" id="CHEBI:29108"/>
    </cofactor>
    <text evidence="2">Binds 2 calcium ions per subunit.</text>
</comment>
<comment type="cofactor">
    <cofactor evidence="2">
        <name>L-topaquinone</name>
        <dbReference type="ChEBI" id="CHEBI:79027"/>
    </cofactor>
    <text evidence="2">Contains 1 topaquinone per subunit.</text>
</comment>
<comment type="subunit">
    <text evidence="2">Homodimer; disulfide-linked. Probably forms heterodimers with AOC2.</text>
</comment>
<comment type="subcellular location">
    <subcellularLocation>
        <location evidence="5 6">Cell membrane</location>
        <topology evidence="2">Single-pass type II membrane protein</topology>
    </subcellularLocation>
</comment>
<comment type="tissue specificity">
    <text evidence="4">Highly expressed in adipocytes, aorta and lung. Expressed at lower levels in heart, kidney, large intestine, liver, small intestine and stomach.</text>
</comment>
<comment type="PTM">
    <text evidence="2">Topaquinone (TPQ) is generated by copper-dependent autoxidation of a specific tyrosyl residue.</text>
</comment>
<comment type="PTM">
    <text evidence="2">N- and O-glycosylated.</text>
</comment>
<comment type="similarity">
    <text evidence="7">Belongs to the copper/topaquinone oxidase family.</text>
</comment>
<keyword id="KW-0106">Calcium</keyword>
<keyword id="KW-0130">Cell adhesion</keyword>
<keyword id="KW-1003">Cell membrane</keyword>
<keyword id="KW-0186">Copper</keyword>
<keyword id="KW-0903">Direct protein sequencing</keyword>
<keyword id="KW-1015">Disulfide bond</keyword>
<keyword id="KW-0325">Glycoprotein</keyword>
<keyword id="KW-0472">Membrane</keyword>
<keyword id="KW-0479">Metal-binding</keyword>
<keyword id="KW-0560">Oxidoreductase</keyword>
<keyword id="KW-1185">Reference proteome</keyword>
<keyword id="KW-0735">Signal-anchor</keyword>
<keyword id="KW-0801">TPQ</keyword>
<keyword id="KW-0812">Transmembrane</keyword>
<keyword id="KW-1133">Transmembrane helix</keyword>
<protein>
    <recommendedName>
        <fullName evidence="2">Amine oxidase [copper-containing] 3</fullName>
        <ecNumber evidence="2">1.4.3.21</ecNumber>
    </recommendedName>
    <alternativeName>
        <fullName evidence="8">Amine oxidase copper-containing 3</fullName>
    </alternativeName>
    <alternativeName>
        <fullName>Copper amine oxidase</fullName>
    </alternativeName>
    <alternativeName>
        <fullName>Semicarbazide-sensitive amine oxidase</fullName>
        <shortName>SSAO</shortName>
    </alternativeName>
    <alternativeName>
        <fullName>VP97</fullName>
    </alternativeName>
    <alternativeName>
        <fullName>Vascular adhesion protein 1</fullName>
        <shortName>VAP-1</shortName>
    </alternativeName>
</protein>
<feature type="initiator methionine" description="Removed" evidence="5">
    <location>
        <position position="1"/>
    </location>
</feature>
<feature type="chain" id="PRO_0000064105" description="Amine oxidase [copper-containing] 3">
    <location>
        <begin position="2"/>
        <end position="763"/>
    </location>
</feature>
<feature type="topological domain" description="Cytoplasmic" evidence="3">
    <location>
        <begin position="2"/>
        <end position="6"/>
    </location>
</feature>
<feature type="transmembrane region" description="Helical; Signal-anchor for type II membrane protein" evidence="3">
    <location>
        <begin position="7"/>
        <end position="27"/>
    </location>
</feature>
<feature type="topological domain" description="Extracellular" evidence="3">
    <location>
        <begin position="28"/>
        <end position="763"/>
    </location>
</feature>
<feature type="active site" description="Proton acceptor" evidence="1">
    <location>
        <position position="386"/>
    </location>
</feature>
<feature type="active site" description="Schiff-base intermediate with substrate; via topaquinone" evidence="2">
    <location>
        <position position="471"/>
    </location>
</feature>
<feature type="binding site" evidence="2">
    <location>
        <position position="520"/>
    </location>
    <ligand>
        <name>Cu(2+)</name>
        <dbReference type="ChEBI" id="CHEBI:29036"/>
    </ligand>
</feature>
<feature type="binding site" evidence="2">
    <location>
        <position position="522"/>
    </location>
    <ligand>
        <name>Cu(2+)</name>
        <dbReference type="ChEBI" id="CHEBI:29036"/>
    </ligand>
</feature>
<feature type="binding site" evidence="2">
    <location>
        <position position="529"/>
    </location>
    <ligand>
        <name>Ca(2+)</name>
        <dbReference type="ChEBI" id="CHEBI:29108"/>
        <label>1</label>
    </ligand>
</feature>
<feature type="binding site" evidence="2">
    <location>
        <position position="530"/>
    </location>
    <ligand>
        <name>Ca(2+)</name>
        <dbReference type="ChEBI" id="CHEBI:29108"/>
        <label>1</label>
    </ligand>
</feature>
<feature type="binding site" evidence="2">
    <location>
        <position position="531"/>
    </location>
    <ligand>
        <name>Ca(2+)</name>
        <dbReference type="ChEBI" id="CHEBI:29108"/>
        <label>1</label>
    </ligand>
</feature>
<feature type="binding site" evidence="2">
    <location>
        <position position="572"/>
    </location>
    <ligand>
        <name>Ca(2+)</name>
        <dbReference type="ChEBI" id="CHEBI:29108"/>
        <label>2</label>
    </ligand>
</feature>
<feature type="binding site" evidence="2">
    <location>
        <position position="641"/>
    </location>
    <ligand>
        <name>Ca(2+)</name>
        <dbReference type="ChEBI" id="CHEBI:29108"/>
        <label>2</label>
    </ligand>
</feature>
<feature type="binding site" evidence="2">
    <location>
        <position position="663"/>
    </location>
    <ligand>
        <name>Ca(2+)</name>
        <dbReference type="ChEBI" id="CHEBI:29108"/>
        <label>2</label>
    </ligand>
</feature>
<feature type="binding site" evidence="2">
    <location>
        <position position="667"/>
    </location>
    <ligand>
        <name>Ca(2+)</name>
        <dbReference type="ChEBI" id="CHEBI:29108"/>
        <label>2</label>
    </ligand>
</feature>
<feature type="binding site" evidence="2">
    <location>
        <position position="673"/>
    </location>
    <ligand>
        <name>Ca(2+)</name>
        <dbReference type="ChEBI" id="CHEBI:29108"/>
        <label>1</label>
    </ligand>
</feature>
<feature type="binding site" evidence="2">
    <location>
        <position position="674"/>
    </location>
    <ligand>
        <name>Ca(2+)</name>
        <dbReference type="ChEBI" id="CHEBI:29108"/>
        <label>1</label>
    </ligand>
</feature>
<feature type="binding site" evidence="2">
    <location>
        <position position="684"/>
    </location>
    <ligand>
        <name>Cu(2+)</name>
        <dbReference type="ChEBI" id="CHEBI:29036"/>
    </ligand>
</feature>
<feature type="modified residue" description="2',4',5'-topaquinone" evidence="2">
    <location>
        <position position="471"/>
    </location>
</feature>
<feature type="glycosylation site" description="N-linked (GlcNAc...) asparagine" evidence="3">
    <location>
        <position position="137"/>
    </location>
</feature>
<feature type="glycosylation site" description="N-linked (GlcNAc...) asparagine" evidence="3">
    <location>
        <position position="232"/>
    </location>
</feature>
<feature type="glycosylation site" description="N-linked (GlcNAc...) asparagine" evidence="3">
    <location>
        <position position="294"/>
    </location>
</feature>
<feature type="glycosylation site" description="N-linked (GlcNAc...) asparagine" evidence="3">
    <location>
        <position position="581"/>
    </location>
</feature>
<feature type="glycosylation site" description="N-linked (GlcNAc...) asparagine" evidence="3">
    <location>
        <position position="592"/>
    </location>
</feature>
<feature type="glycosylation site" description="N-linked (GlcNAc...) asparagine" evidence="3">
    <location>
        <position position="666"/>
    </location>
</feature>
<feature type="disulfide bond" evidence="2">
    <location>
        <begin position="198"/>
        <end position="199"/>
    </location>
</feature>
<feature type="disulfide bond" evidence="2">
    <location>
        <begin position="404"/>
        <end position="430"/>
    </location>
</feature>
<feature type="disulfide bond" evidence="2">
    <location>
        <begin position="734"/>
        <end position="741"/>
    </location>
</feature>
<feature type="disulfide bond" description="Interchain" evidence="2">
    <location>
        <position position="748"/>
    </location>
</feature>
<feature type="sequence conflict" description="In Ref. 3; AAC53189." evidence="7" ref="3">
    <original>P</original>
    <variation>S</variation>
    <location>
        <position position="54"/>
    </location>
</feature>
<feature type="sequence conflict" description="In Ref. 1; BAD74047." evidence="7" ref="1">
    <original>Q</original>
    <variation>R</variation>
    <location>
        <position position="329"/>
    </location>
</feature>
<feature type="sequence conflict" description="In Ref. 1; BAD74047." evidence="7" ref="1">
    <original>S</original>
    <variation>F</variation>
    <location>
        <position position="645"/>
    </location>
</feature>
<reference key="1">
    <citation type="journal article" date="2005" name="Biol. Pharm. Bull.">
        <title>Molecular cloning and characterization of rat semicarbazide-sensitive amine oxidase.</title>
        <authorList>
            <person name="Ochiai Y."/>
            <person name="Itoh K."/>
            <person name="Sakurai E."/>
            <person name="Tanaka Y."/>
        </authorList>
    </citation>
    <scope>NUCLEOTIDE SEQUENCE [MRNA]</scope>
    <scope>FUNCTION</scope>
    <scope>CATALYTIC ACTIVITY</scope>
    <scope>TISSUE SPECIFICITY</scope>
    <source>
        <strain>Wistar</strain>
        <tissue>Aorta</tissue>
    </source>
</reference>
<reference key="2">
    <citation type="journal article" date="2004" name="Genome Res.">
        <title>The status, quality, and expansion of the NIH full-length cDNA project: the Mammalian Gene Collection (MGC).</title>
        <authorList>
            <consortium name="The MGC Project Team"/>
        </authorList>
    </citation>
    <scope>NUCLEOTIDE SEQUENCE [LARGE SCALE MRNA]</scope>
    <source>
        <tissue>Prostate</tissue>
    </source>
</reference>
<reference key="3">
    <citation type="journal article" date="1997" name="J. Biol. Chem.">
        <title>Membrane amine oxidase cloning and identification as a major protein in the adipocyte plasma membrane.</title>
        <authorList>
            <person name="Morris N.J."/>
            <person name="Ducret A."/>
            <person name="Aebersold R."/>
            <person name="Ross S.A."/>
            <person name="Keller S.R."/>
            <person name="Lienhard G.E."/>
        </authorList>
    </citation>
    <scope>NUCLEOTIDE SEQUENCE [MRNA] OF 1-322</scope>
    <scope>PARTIAL PROTEIN SEQUENCE</scope>
    <scope>SUBCELLULAR LOCATION</scope>
    <source>
        <strain>Sprague-Dawley</strain>
        <tissue>Adipocyte</tissue>
    </source>
</reference>
<reference key="4">
    <citation type="journal article" date="1995" name="Mol. Membr. Biol.">
        <title>The major integral membrane glycoprotein in adipocytes is a novel 200-kDa heterodimer.</title>
        <authorList>
            <person name="Jochen A."/>
            <person name="Guven S."/>
            <person name="Hays J."/>
        </authorList>
    </citation>
    <scope>PROTEIN SEQUENCE OF 2-20</scope>
    <scope>SUBCELLULAR LOCATION</scope>
    <source>
        <tissue>Adipocyte</tissue>
    </source>
</reference>
<dbReference type="EC" id="1.4.3.21" evidence="2"/>
<dbReference type="EMBL" id="AB195675">
    <property type="protein sequence ID" value="BAD74047.1"/>
    <property type="molecule type" value="mRNA"/>
</dbReference>
<dbReference type="EMBL" id="BC100613">
    <property type="protein sequence ID" value="AAI00614.1"/>
    <property type="molecule type" value="mRNA"/>
</dbReference>
<dbReference type="EMBL" id="U72632">
    <property type="protein sequence ID" value="AAC53189.1"/>
    <property type="molecule type" value="mRNA"/>
</dbReference>
<dbReference type="RefSeq" id="NP_113770.2">
    <property type="nucleotide sequence ID" value="NM_031582.3"/>
</dbReference>
<dbReference type="SMR" id="O08590"/>
<dbReference type="BioGRID" id="248115">
    <property type="interactions" value="1"/>
</dbReference>
<dbReference type="FunCoup" id="O08590">
    <property type="interactions" value="90"/>
</dbReference>
<dbReference type="STRING" id="10116.ENSRNOP00000068449"/>
<dbReference type="BindingDB" id="O08590"/>
<dbReference type="ChEMBL" id="CHEMBL4592"/>
<dbReference type="DrugCentral" id="O08590"/>
<dbReference type="GlyCosmos" id="O08590">
    <property type="glycosylation" value="6 sites, No reported glycans"/>
</dbReference>
<dbReference type="GlyGen" id="O08590">
    <property type="glycosylation" value="7 sites"/>
</dbReference>
<dbReference type="iPTMnet" id="O08590"/>
<dbReference type="PhosphoSitePlus" id="O08590"/>
<dbReference type="PaxDb" id="10116-ENSRNOP00000068449"/>
<dbReference type="GeneID" id="29473"/>
<dbReference type="KEGG" id="rno:29473"/>
<dbReference type="UCSC" id="RGD:62058">
    <property type="organism name" value="rat"/>
</dbReference>
<dbReference type="AGR" id="RGD:62058"/>
<dbReference type="CTD" id="8639"/>
<dbReference type="RGD" id="62058">
    <property type="gene designation" value="Aoc3"/>
</dbReference>
<dbReference type="VEuPathDB" id="HostDB:ENSRNOG00000053448"/>
<dbReference type="eggNOG" id="KOG1186">
    <property type="taxonomic scope" value="Eukaryota"/>
</dbReference>
<dbReference type="HOGENOM" id="CLU_015739_1_0_1"/>
<dbReference type="InParanoid" id="O08590"/>
<dbReference type="OrthoDB" id="22353at9989"/>
<dbReference type="BRENDA" id="1.4.3.21">
    <property type="organism ID" value="5301"/>
</dbReference>
<dbReference type="Reactome" id="R-RNO-211945">
    <property type="pathway name" value="Phase I - Functionalization of compounds"/>
</dbReference>
<dbReference type="PRO" id="PR:O08590"/>
<dbReference type="Proteomes" id="UP000002494">
    <property type="component" value="Chromosome 10"/>
</dbReference>
<dbReference type="Bgee" id="ENSRNOG00000051307">
    <property type="expression patterns" value="Expressed in lung and 19 other cell types or tissues"/>
</dbReference>
<dbReference type="GO" id="GO:0009986">
    <property type="term" value="C:cell surface"/>
    <property type="evidence" value="ECO:0000250"/>
    <property type="project" value="UniProtKB"/>
</dbReference>
<dbReference type="GO" id="GO:0005737">
    <property type="term" value="C:cytoplasm"/>
    <property type="evidence" value="ECO:0000266"/>
    <property type="project" value="RGD"/>
</dbReference>
<dbReference type="GO" id="GO:0005769">
    <property type="term" value="C:early endosome"/>
    <property type="evidence" value="ECO:0000266"/>
    <property type="project" value="RGD"/>
</dbReference>
<dbReference type="GO" id="GO:0005783">
    <property type="term" value="C:endoplasmic reticulum"/>
    <property type="evidence" value="ECO:0000266"/>
    <property type="project" value="RGD"/>
</dbReference>
<dbReference type="GO" id="GO:0005615">
    <property type="term" value="C:extracellular space"/>
    <property type="evidence" value="ECO:0000314"/>
    <property type="project" value="RGD"/>
</dbReference>
<dbReference type="GO" id="GO:0005794">
    <property type="term" value="C:Golgi apparatus"/>
    <property type="evidence" value="ECO:0000266"/>
    <property type="project" value="RGD"/>
</dbReference>
<dbReference type="GO" id="GO:0016020">
    <property type="term" value="C:membrane"/>
    <property type="evidence" value="ECO:0000250"/>
    <property type="project" value="UniProtKB"/>
</dbReference>
<dbReference type="GO" id="GO:0005902">
    <property type="term" value="C:microvillus"/>
    <property type="evidence" value="ECO:0000266"/>
    <property type="project" value="RGD"/>
</dbReference>
<dbReference type="GO" id="GO:0005886">
    <property type="term" value="C:plasma membrane"/>
    <property type="evidence" value="ECO:0000250"/>
    <property type="project" value="UniProtKB"/>
</dbReference>
<dbReference type="GO" id="GO:0005509">
    <property type="term" value="F:calcium ion binding"/>
    <property type="evidence" value="ECO:0000266"/>
    <property type="project" value="RGD"/>
</dbReference>
<dbReference type="GO" id="GO:0005507">
    <property type="term" value="F:copper ion binding"/>
    <property type="evidence" value="ECO:0000266"/>
    <property type="project" value="RGD"/>
</dbReference>
<dbReference type="GO" id="GO:0042802">
    <property type="term" value="F:identical protein binding"/>
    <property type="evidence" value="ECO:0000353"/>
    <property type="project" value="RGD"/>
</dbReference>
<dbReference type="GO" id="GO:0008131">
    <property type="term" value="F:primary methylamine oxidase activity"/>
    <property type="evidence" value="ECO:0000314"/>
    <property type="project" value="RGD"/>
</dbReference>
<dbReference type="GO" id="GO:0046982">
    <property type="term" value="F:protein heterodimerization activity"/>
    <property type="evidence" value="ECO:0000266"/>
    <property type="project" value="RGD"/>
</dbReference>
<dbReference type="GO" id="GO:0048038">
    <property type="term" value="F:quinone binding"/>
    <property type="evidence" value="ECO:0000250"/>
    <property type="project" value="UniProtKB"/>
</dbReference>
<dbReference type="GO" id="GO:0009308">
    <property type="term" value="P:amine metabolic process"/>
    <property type="evidence" value="ECO:0000250"/>
    <property type="project" value="UniProtKB"/>
</dbReference>
<dbReference type="GO" id="GO:0007155">
    <property type="term" value="P:cell adhesion"/>
    <property type="evidence" value="ECO:0000250"/>
    <property type="project" value="UniProtKB"/>
</dbReference>
<dbReference type="GO" id="GO:0042755">
    <property type="term" value="P:eating behavior"/>
    <property type="evidence" value="ECO:0000315"/>
    <property type="project" value="RGD"/>
</dbReference>
<dbReference type="GO" id="GO:0002523">
    <property type="term" value="P:leukocyte migration involved in inflammatory response"/>
    <property type="evidence" value="ECO:0000315"/>
    <property type="project" value="RGD"/>
</dbReference>
<dbReference type="GO" id="GO:0002675">
    <property type="term" value="P:positive regulation of acute inflammatory response"/>
    <property type="evidence" value="ECO:0000315"/>
    <property type="project" value="RGD"/>
</dbReference>
<dbReference type="GO" id="GO:0010828">
    <property type="term" value="P:positive regulation of D-glucose transmembrane transport"/>
    <property type="evidence" value="ECO:0000314"/>
    <property type="project" value="RGD"/>
</dbReference>
<dbReference type="GO" id="GO:0002687">
    <property type="term" value="P:positive regulation of leukocyte migration"/>
    <property type="evidence" value="ECO:0000315"/>
    <property type="project" value="RGD"/>
</dbReference>
<dbReference type="GO" id="GO:0008217">
    <property type="term" value="P:regulation of blood pressure"/>
    <property type="evidence" value="ECO:0000315"/>
    <property type="project" value="RGD"/>
</dbReference>
<dbReference type="GO" id="GO:0035902">
    <property type="term" value="P:response to immobilization stress"/>
    <property type="evidence" value="ECO:0000315"/>
    <property type="project" value="RGD"/>
</dbReference>
<dbReference type="FunFam" id="2.70.98.20:FF:000003">
    <property type="entry name" value="Amine oxidase"/>
    <property type="match status" value="1"/>
</dbReference>
<dbReference type="FunFam" id="3.10.450.40:FF:000001">
    <property type="entry name" value="Amine oxidase"/>
    <property type="match status" value="1"/>
</dbReference>
<dbReference type="FunFam" id="3.10.450.40:FF:000003">
    <property type="entry name" value="Amine oxidase"/>
    <property type="match status" value="1"/>
</dbReference>
<dbReference type="Gene3D" id="3.10.450.40">
    <property type="match status" value="2"/>
</dbReference>
<dbReference type="Gene3D" id="2.70.98.20">
    <property type="entry name" value="Copper amine oxidase, catalytic domain"/>
    <property type="match status" value="1"/>
</dbReference>
<dbReference type="InterPro" id="IPR049947">
    <property type="entry name" value="Cu_Am_Ox_Cu-bd"/>
</dbReference>
<dbReference type="InterPro" id="IPR049948">
    <property type="entry name" value="Cu_Am_ox_TPQ-bd"/>
</dbReference>
<dbReference type="InterPro" id="IPR000269">
    <property type="entry name" value="Cu_amine_oxidase"/>
</dbReference>
<dbReference type="InterPro" id="IPR015798">
    <property type="entry name" value="Cu_amine_oxidase_C"/>
</dbReference>
<dbReference type="InterPro" id="IPR036460">
    <property type="entry name" value="Cu_amine_oxidase_C_sf"/>
</dbReference>
<dbReference type="InterPro" id="IPR016182">
    <property type="entry name" value="Cu_amine_oxidase_N-reg"/>
</dbReference>
<dbReference type="InterPro" id="IPR015800">
    <property type="entry name" value="Cu_amine_oxidase_N2"/>
</dbReference>
<dbReference type="InterPro" id="IPR015802">
    <property type="entry name" value="Cu_amine_oxidase_N3"/>
</dbReference>
<dbReference type="PANTHER" id="PTHR10638">
    <property type="entry name" value="COPPER AMINE OXIDASE"/>
    <property type="match status" value="1"/>
</dbReference>
<dbReference type="PANTHER" id="PTHR10638:SF23">
    <property type="entry name" value="MEMBRANE PRIMARY AMINE OXIDASE"/>
    <property type="match status" value="1"/>
</dbReference>
<dbReference type="Pfam" id="PF01179">
    <property type="entry name" value="Cu_amine_oxid"/>
    <property type="match status" value="1"/>
</dbReference>
<dbReference type="Pfam" id="PF02727">
    <property type="entry name" value="Cu_amine_oxidN2"/>
    <property type="match status" value="1"/>
</dbReference>
<dbReference type="Pfam" id="PF02728">
    <property type="entry name" value="Cu_amine_oxidN3"/>
    <property type="match status" value="1"/>
</dbReference>
<dbReference type="PRINTS" id="PR00766">
    <property type="entry name" value="CUDAOXIDASE"/>
</dbReference>
<dbReference type="SUPFAM" id="SSF49998">
    <property type="entry name" value="Amine oxidase catalytic domain"/>
    <property type="match status" value="1"/>
</dbReference>
<dbReference type="SUPFAM" id="SSF54416">
    <property type="entry name" value="Amine oxidase N-terminal region"/>
    <property type="match status" value="2"/>
</dbReference>
<dbReference type="PROSITE" id="PS01164">
    <property type="entry name" value="COPPER_AMINE_OXID_1"/>
    <property type="match status" value="1"/>
</dbReference>
<dbReference type="PROSITE" id="PS01165">
    <property type="entry name" value="COPPER_AMINE_OXID_2"/>
    <property type="match status" value="1"/>
</dbReference>
<sequence length="763" mass="84981">MTQKTTLVLLALAVITIFALVCVLLAGRSGDGGRLSQPLHCPSVLPSVQPQTHPGQSQPFADLSPEELTAVMSFLIKHLGPGLVDAAQARPSDNCVFSVELQLPAKAAALAHLDRGGPPPVREALAIIFFGGQPKPNVSELVVGPLPHPSYMRDVTVERHGGPLPYYRRPVLTREYQDIQEMIFHRELPQASGLLHHCCFYKRQGHNLLKMTTAPRGLQSGDRATWFGIYYNLSGAGFYPHPIGLELLVDHKALDPALWTIQKVFYQGRYYESLTQLEDMFEAGLVNVVLVPDNGTGGSWSLKSSVPPGRAPPLQFHPEGPRFSVQGSQVRSSLWAFSFGLGAFSGPRIFDIRFQGERVAYEISVQEAIALYGGNSPASMSTCYMDGSFGIGKYSTPLTRGVDCPYLATYVDWHFLLESQTPKTLRDAFCVFEQNQGLPLRRHHSDFYSHYFGGVVETVLVVRSVATLLNYDYVWDMVFHSNGAIEVKFHATGYITSAFFFGAGEKFGNRVAEHTLGTVHTHNAHFKVDLDVAGLKNWAWAEDLAFVPMNVPWQPEFQMQRLQVTRKLLETEEEAAFPLGNATPRYLYLASNHSNKWGHRRGYRIQILSFAGKPLPQESPIEKAFTWGRYHLAVTQRKEEEPSSSSIYNQNDPWTPTVDFTDFISNETIAGEDLVAWVTAGFLHIPHAEDIPNTVTVGNGVGFFLRPYNFFDEDPSFYSPDSIYFRKDQDVTDCEVNSLACLSQTANCVPDLPAFSHGGFTYK</sequence>
<gene>
    <name evidence="8" type="primary">Aoc3</name>
</gene>
<evidence type="ECO:0000250" key="1">
    <source>
        <dbReference type="UniProtKB" id="P19801"/>
    </source>
</evidence>
<evidence type="ECO:0000250" key="2">
    <source>
        <dbReference type="UniProtKB" id="Q16853"/>
    </source>
</evidence>
<evidence type="ECO:0000255" key="3"/>
<evidence type="ECO:0000269" key="4">
    <source>
    </source>
</evidence>
<evidence type="ECO:0000269" key="5">
    <source>
    </source>
</evidence>
<evidence type="ECO:0000269" key="6">
    <source>
    </source>
</evidence>
<evidence type="ECO:0000305" key="7"/>
<evidence type="ECO:0000312" key="8">
    <source>
        <dbReference type="RGD" id="62058"/>
    </source>
</evidence>
<organism>
    <name type="scientific">Rattus norvegicus</name>
    <name type="common">Rat</name>
    <dbReference type="NCBI Taxonomy" id="10116"/>
    <lineage>
        <taxon>Eukaryota</taxon>
        <taxon>Metazoa</taxon>
        <taxon>Chordata</taxon>
        <taxon>Craniata</taxon>
        <taxon>Vertebrata</taxon>
        <taxon>Euteleostomi</taxon>
        <taxon>Mammalia</taxon>
        <taxon>Eutheria</taxon>
        <taxon>Euarchontoglires</taxon>
        <taxon>Glires</taxon>
        <taxon>Rodentia</taxon>
        <taxon>Myomorpha</taxon>
        <taxon>Muroidea</taxon>
        <taxon>Muridae</taxon>
        <taxon>Murinae</taxon>
        <taxon>Rattus</taxon>
    </lineage>
</organism>
<accession>O08590</accession>
<accession>Q497D2</accession>
<accession>Q5R1T5</accession>